<protein>
    <recommendedName>
        <fullName evidence="5">Thioesterase TesA</fullName>
        <ecNumber evidence="1">3.1.2.-</ecNumber>
    </recommendedName>
</protein>
<sequence>MNGRSSNSKSDEKLTAPTLYIFPHAGGTAKDYVPFAKEFSGEVKRVAVQYPGQQDGYGLPPLESIPGLAEEIFAIMKPAARIDTPVALFGHSMGGMLAFEVALRFEAAGYRVLALFLSACSAPGHIKYKQLKGYSDNEMLDLVARATGTDPEFFNDEEFRVGVLPTLRAVRAIAGYSCPPENKLSCPIYTFIGSKDWIATREDMEPWRERTTGDFSLREFPGDHFYLNKNLPELVSDIEIGTLQQFDQI</sequence>
<organism>
    <name type="scientific">Mycobacterium marinum (strain ATCC BAA-535 / M)</name>
    <dbReference type="NCBI Taxonomy" id="216594"/>
    <lineage>
        <taxon>Bacteria</taxon>
        <taxon>Bacillati</taxon>
        <taxon>Actinomycetota</taxon>
        <taxon>Actinomycetes</taxon>
        <taxon>Mycobacteriales</taxon>
        <taxon>Mycobacteriaceae</taxon>
        <taxon>Mycobacterium</taxon>
        <taxon>Mycobacterium ulcerans group</taxon>
    </lineage>
</organism>
<evidence type="ECO:0000250" key="1">
    <source>
        <dbReference type="UniProtKB" id="P9WQD5"/>
    </source>
</evidence>
<evidence type="ECO:0000269" key="2">
    <source>
    </source>
</evidence>
<evidence type="ECO:0000269" key="3">
    <source>
    </source>
</evidence>
<evidence type="ECO:0000303" key="4">
    <source>
    </source>
</evidence>
<evidence type="ECO:0000305" key="5"/>
<evidence type="ECO:0000305" key="6">
    <source>
    </source>
</evidence>
<evidence type="ECO:0000312" key="7">
    <source>
        <dbReference type="EMBL" id="ACC40227.1"/>
    </source>
</evidence>
<name>TESA_MYCMM</name>
<dbReference type="EC" id="3.1.2.-" evidence="1"/>
<dbReference type="EMBL" id="CP000854">
    <property type="protein sequence ID" value="ACC40227.1"/>
    <property type="molecule type" value="Genomic_DNA"/>
</dbReference>
<dbReference type="SMR" id="B2HIN3"/>
<dbReference type="STRING" id="216594.MMAR_1778"/>
<dbReference type="ESTHER" id="mycmm-tesa">
    <property type="family name" value="Thioesterase"/>
</dbReference>
<dbReference type="KEGG" id="mmi:MMAR_1778"/>
<dbReference type="eggNOG" id="COG3208">
    <property type="taxonomic scope" value="Bacteria"/>
</dbReference>
<dbReference type="HOGENOM" id="CLU_070456_1_2_11"/>
<dbReference type="OrthoDB" id="8480037at2"/>
<dbReference type="BioCyc" id="MetaCyc:MONOMER-19643"/>
<dbReference type="Proteomes" id="UP000001190">
    <property type="component" value="Chromosome"/>
</dbReference>
<dbReference type="GO" id="GO:0047617">
    <property type="term" value="F:fatty acyl-CoA hydrolase activity"/>
    <property type="evidence" value="ECO:0007669"/>
    <property type="project" value="RHEA"/>
</dbReference>
<dbReference type="GO" id="GO:0008610">
    <property type="term" value="P:lipid biosynthetic process"/>
    <property type="evidence" value="ECO:0007669"/>
    <property type="project" value="TreeGrafter"/>
</dbReference>
<dbReference type="Gene3D" id="3.40.50.1820">
    <property type="entry name" value="alpha/beta hydrolase"/>
    <property type="match status" value="1"/>
</dbReference>
<dbReference type="InterPro" id="IPR029058">
    <property type="entry name" value="AB_hydrolase_fold"/>
</dbReference>
<dbReference type="InterPro" id="IPR020802">
    <property type="entry name" value="PKS_thioesterase"/>
</dbReference>
<dbReference type="InterPro" id="IPR012223">
    <property type="entry name" value="TEII"/>
</dbReference>
<dbReference type="InterPro" id="IPR001031">
    <property type="entry name" value="Thioesterase"/>
</dbReference>
<dbReference type="PANTHER" id="PTHR11487:SF0">
    <property type="entry name" value="S-ACYL FATTY ACID SYNTHASE THIOESTERASE, MEDIUM CHAIN"/>
    <property type="match status" value="1"/>
</dbReference>
<dbReference type="PANTHER" id="PTHR11487">
    <property type="entry name" value="THIOESTERASE"/>
    <property type="match status" value="1"/>
</dbReference>
<dbReference type="Pfam" id="PF00975">
    <property type="entry name" value="Thioesterase"/>
    <property type="match status" value="1"/>
</dbReference>
<dbReference type="SMART" id="SM00824">
    <property type="entry name" value="PKS_TE"/>
    <property type="match status" value="1"/>
</dbReference>
<dbReference type="SUPFAM" id="SSF53474">
    <property type="entry name" value="alpha/beta-Hydrolases"/>
    <property type="match status" value="1"/>
</dbReference>
<proteinExistence type="evidence at protein level"/>
<reference key="1">
    <citation type="journal article" date="2008" name="Genome Res.">
        <title>Insights from the complete genome sequence of Mycobacterium marinum on the evolution of Mycobacterium tuberculosis.</title>
        <authorList>
            <person name="Stinear T.P."/>
            <person name="Seemann T."/>
            <person name="Harrison P.F."/>
            <person name="Jenkin G.A."/>
            <person name="Davies J.K."/>
            <person name="Johnson P.D."/>
            <person name="Abdellah Z."/>
            <person name="Arrowsmith C."/>
            <person name="Chillingworth T."/>
            <person name="Churcher C."/>
            <person name="Clarke K."/>
            <person name="Cronin A."/>
            <person name="Davis P."/>
            <person name="Goodhead I."/>
            <person name="Holroyd N."/>
            <person name="Jagels K."/>
            <person name="Lord A."/>
            <person name="Moule S."/>
            <person name="Mungall K."/>
            <person name="Norbertczak H."/>
            <person name="Quail M.A."/>
            <person name="Rabbinowitsch E."/>
            <person name="Walker D."/>
            <person name="White B."/>
            <person name="Whitehead S."/>
            <person name="Small P.L."/>
            <person name="Brosch R."/>
            <person name="Ramakrishnan L."/>
            <person name="Fischbach M.A."/>
            <person name="Parkhill J."/>
            <person name="Cole S.T."/>
        </authorList>
    </citation>
    <scope>NUCLEOTIDE SEQUENCE [LARGE SCALE GENOMIC DNA]</scope>
    <source>
        <strain>ATCC BAA-535 / M</strain>
    </source>
</reference>
<reference key="2">
    <citation type="journal article" date="2011" name="J. Biol. Chem.">
        <title>Inactivation of tesA reduces cell wall lipid production and increases drug susceptibility in mycobacteria.</title>
        <authorList>
            <person name="Chavadi S.S."/>
            <person name="Edupuganti U.R."/>
            <person name="Vergnolle O."/>
            <person name="Fatima I."/>
            <person name="Singh S.M."/>
            <person name="Soll C.E."/>
            <person name="Quadri L.E."/>
        </authorList>
    </citation>
    <scope>FUNCTION</scope>
    <scope>DISRUPTION PHENOTYPE</scope>
    <scope>MUTAGENESIS OF SER-92</scope>
    <source>
        <strain>ATCC BAA-535 / M</strain>
    </source>
</reference>
<reference key="3">
    <citation type="journal article" date="2011" name="Mol. Microbiol.">
        <title>A Mycobacterium marinum TesA mutant defective for major cell wall-associated lipids is highly attenuated in Dictyostelium discoideum and zebrafish embryos.</title>
        <authorList>
            <person name="Alibaud L."/>
            <person name="Rombouts Y."/>
            <person name="Trivelli X."/>
            <person name="Burguiere A."/>
            <person name="Cirillo S.L."/>
            <person name="Cirillo J.D."/>
            <person name="Dubremetz J.F."/>
            <person name="Guerardel Y."/>
            <person name="Lutfalla G."/>
            <person name="Kremer L."/>
        </authorList>
    </citation>
    <scope>FUNCTION</scope>
    <scope>DISRUPTION PHENOTYPE</scope>
</reference>
<gene>
    <name evidence="4" type="primary">tesA</name>
    <name evidence="7" type="ordered locus">MMAR_1778</name>
</gene>
<comment type="function">
    <text evidence="2 3">Involved in the synthesis of both phthiocerol dimycocerosates (PDIMs) and phenolic glycolipids (PGLs), which are structurally related lipids non-covalently bound to the outer cell wall layer of M.tuberculosis and are important virulence factors.</text>
</comment>
<comment type="catalytic activity">
    <reaction evidence="1">
        <text>a fatty acyl-CoA + H2O = a fatty acid + CoA + H(+)</text>
        <dbReference type="Rhea" id="RHEA:16781"/>
        <dbReference type="ChEBI" id="CHEBI:15377"/>
        <dbReference type="ChEBI" id="CHEBI:15378"/>
        <dbReference type="ChEBI" id="CHEBI:28868"/>
        <dbReference type="ChEBI" id="CHEBI:57287"/>
        <dbReference type="ChEBI" id="CHEBI:77636"/>
    </reaction>
</comment>
<comment type="disruption phenotype">
    <text evidence="2 3">Deletion of the gene leads to a drastic reduction in PDIM and PGL production (PubMed:21375593, PubMed:21592957). Mutant shows increased susceptibility to several antibiotics (PubMed:21375593, PubMed:21592957). Mutant is highly attenuated when injected into the zebrafish embryo bloodstream, but virulence is retained when bacteria are injected into the notochord (PubMed:21375593). Deletion leads to an increase in growth yield in vitro (PubMed:21592957).</text>
</comment>
<comment type="similarity">
    <text evidence="5">Belongs to the thioesterase family.</text>
</comment>
<feature type="chain" id="PRO_0000448708" description="Thioesterase TesA">
    <location>
        <begin position="1"/>
        <end position="249"/>
    </location>
</feature>
<feature type="active site" evidence="6">
    <location>
        <position position="92"/>
    </location>
</feature>
<feature type="active site" evidence="1">
    <location>
        <position position="196"/>
    </location>
</feature>
<feature type="active site" evidence="1">
    <location>
        <position position="224"/>
    </location>
</feature>
<feature type="mutagenesis site" description="Loss of activity." evidence="3">
    <original>S</original>
    <variation>A</variation>
    <location>
        <position position="92"/>
    </location>
</feature>
<accession>B2HIN3</accession>
<keyword id="KW-0378">Hydrolase</keyword>
<keyword id="KW-0444">Lipid biosynthesis</keyword>
<keyword id="KW-0443">Lipid metabolism</keyword>
<keyword id="KW-1185">Reference proteome</keyword>
<keyword id="KW-0843">Virulence</keyword>